<feature type="chain" id="PRO_1000086560" description="Large ribosomal subunit protein uL22">
    <location>
        <begin position="1"/>
        <end position="113"/>
    </location>
</feature>
<organism>
    <name type="scientific">Pelotomaculum thermopropionicum (strain DSM 13744 / JCM 10971 / SI)</name>
    <dbReference type="NCBI Taxonomy" id="370438"/>
    <lineage>
        <taxon>Bacteria</taxon>
        <taxon>Bacillati</taxon>
        <taxon>Bacillota</taxon>
        <taxon>Clostridia</taxon>
        <taxon>Eubacteriales</taxon>
        <taxon>Desulfotomaculaceae</taxon>
        <taxon>Pelotomaculum</taxon>
    </lineage>
</organism>
<evidence type="ECO:0000255" key="1">
    <source>
        <dbReference type="HAMAP-Rule" id="MF_01331"/>
    </source>
</evidence>
<evidence type="ECO:0000305" key="2"/>
<proteinExistence type="inferred from homology"/>
<keyword id="KW-1185">Reference proteome</keyword>
<keyword id="KW-0687">Ribonucleoprotein</keyword>
<keyword id="KW-0689">Ribosomal protein</keyword>
<keyword id="KW-0694">RNA-binding</keyword>
<keyword id="KW-0699">rRNA-binding</keyword>
<name>RL22_PELTS</name>
<gene>
    <name evidence="1" type="primary">rplV</name>
    <name type="ordered locus">PTH_0325</name>
</gene>
<dbReference type="EMBL" id="AP009389">
    <property type="protein sequence ID" value="BAF58506.1"/>
    <property type="molecule type" value="Genomic_DNA"/>
</dbReference>
<dbReference type="SMR" id="A5D5J5"/>
<dbReference type="STRING" id="370438.PTH_0325"/>
<dbReference type="KEGG" id="pth:PTH_0325"/>
<dbReference type="eggNOG" id="COG0091">
    <property type="taxonomic scope" value="Bacteria"/>
</dbReference>
<dbReference type="HOGENOM" id="CLU_083987_3_3_9"/>
<dbReference type="Proteomes" id="UP000006556">
    <property type="component" value="Chromosome"/>
</dbReference>
<dbReference type="GO" id="GO:0022625">
    <property type="term" value="C:cytosolic large ribosomal subunit"/>
    <property type="evidence" value="ECO:0007669"/>
    <property type="project" value="TreeGrafter"/>
</dbReference>
<dbReference type="GO" id="GO:0019843">
    <property type="term" value="F:rRNA binding"/>
    <property type="evidence" value="ECO:0007669"/>
    <property type="project" value="UniProtKB-UniRule"/>
</dbReference>
<dbReference type="GO" id="GO:0003735">
    <property type="term" value="F:structural constituent of ribosome"/>
    <property type="evidence" value="ECO:0007669"/>
    <property type="project" value="InterPro"/>
</dbReference>
<dbReference type="GO" id="GO:0006412">
    <property type="term" value="P:translation"/>
    <property type="evidence" value="ECO:0007669"/>
    <property type="project" value="UniProtKB-UniRule"/>
</dbReference>
<dbReference type="CDD" id="cd00336">
    <property type="entry name" value="Ribosomal_L22"/>
    <property type="match status" value="1"/>
</dbReference>
<dbReference type="FunFam" id="3.90.470.10:FF:000011">
    <property type="entry name" value="50S ribosomal protein L22"/>
    <property type="match status" value="1"/>
</dbReference>
<dbReference type="Gene3D" id="3.90.470.10">
    <property type="entry name" value="Ribosomal protein L22/L17"/>
    <property type="match status" value="1"/>
</dbReference>
<dbReference type="HAMAP" id="MF_01331_B">
    <property type="entry name" value="Ribosomal_uL22_B"/>
    <property type="match status" value="1"/>
</dbReference>
<dbReference type="InterPro" id="IPR001063">
    <property type="entry name" value="Ribosomal_uL22"/>
</dbReference>
<dbReference type="InterPro" id="IPR005727">
    <property type="entry name" value="Ribosomal_uL22_bac/chlpt-type"/>
</dbReference>
<dbReference type="InterPro" id="IPR047867">
    <property type="entry name" value="Ribosomal_uL22_bac/org-type"/>
</dbReference>
<dbReference type="InterPro" id="IPR018260">
    <property type="entry name" value="Ribosomal_uL22_CS"/>
</dbReference>
<dbReference type="InterPro" id="IPR036394">
    <property type="entry name" value="Ribosomal_uL22_sf"/>
</dbReference>
<dbReference type="NCBIfam" id="TIGR01044">
    <property type="entry name" value="rplV_bact"/>
    <property type="match status" value="1"/>
</dbReference>
<dbReference type="PANTHER" id="PTHR13501">
    <property type="entry name" value="CHLOROPLAST 50S RIBOSOMAL PROTEIN L22-RELATED"/>
    <property type="match status" value="1"/>
</dbReference>
<dbReference type="PANTHER" id="PTHR13501:SF8">
    <property type="entry name" value="LARGE RIBOSOMAL SUBUNIT PROTEIN UL22M"/>
    <property type="match status" value="1"/>
</dbReference>
<dbReference type="Pfam" id="PF00237">
    <property type="entry name" value="Ribosomal_L22"/>
    <property type="match status" value="1"/>
</dbReference>
<dbReference type="SUPFAM" id="SSF54843">
    <property type="entry name" value="Ribosomal protein L22"/>
    <property type="match status" value="1"/>
</dbReference>
<dbReference type="PROSITE" id="PS00464">
    <property type="entry name" value="RIBOSOMAL_L22"/>
    <property type="match status" value="1"/>
</dbReference>
<protein>
    <recommendedName>
        <fullName evidence="1">Large ribosomal subunit protein uL22</fullName>
    </recommendedName>
    <alternativeName>
        <fullName evidence="2">50S ribosomal protein L22</fullName>
    </alternativeName>
</protein>
<reference key="1">
    <citation type="journal article" date="2008" name="Genome Res.">
        <title>The genome of Pelotomaculum thermopropionicum reveals niche-associated evolution in anaerobic microbiota.</title>
        <authorList>
            <person name="Kosaka T."/>
            <person name="Kato S."/>
            <person name="Shimoyama T."/>
            <person name="Ishii S."/>
            <person name="Abe T."/>
            <person name="Watanabe K."/>
        </authorList>
    </citation>
    <scope>NUCLEOTIDE SEQUENCE [LARGE SCALE GENOMIC DNA]</scope>
    <source>
        <strain>DSM 13744 / JCM 10971 / SI</strain>
    </source>
</reference>
<comment type="function">
    <text evidence="1">This protein binds specifically to 23S rRNA; its binding is stimulated by other ribosomal proteins, e.g. L4, L17, and L20. It is important during the early stages of 50S assembly. It makes multiple contacts with different domains of the 23S rRNA in the assembled 50S subunit and ribosome (By similarity).</text>
</comment>
<comment type="function">
    <text evidence="1">The globular domain of the protein is located near the polypeptide exit tunnel on the outside of the subunit, while an extended beta-hairpin is found that lines the wall of the exit tunnel in the center of the 70S ribosome.</text>
</comment>
<comment type="subunit">
    <text evidence="1">Part of the 50S ribosomal subunit.</text>
</comment>
<comment type="similarity">
    <text evidence="1">Belongs to the universal ribosomal protein uL22 family.</text>
</comment>
<accession>A5D5J5</accession>
<sequence>MEAKAVARYIRISPRKVRQVVDLIRGKKLNEALAILRYTPKRASAVVAKVVRSAAANAENNLQMDRDELFIKACYVDQGPTYKRYMPRAFGRADVMRKRTSHITVVVSDKKEG</sequence>